<name>IL6_SPAAU</name>
<reference key="1">
    <citation type="journal article" date="2008" name="Mol. Immunol.">
        <title>Molecular characterization of interleukin-6 in the gilthead seabream (Sparus aurata).</title>
        <authorList>
            <person name="Castellana B."/>
            <person name="Iliev D.B."/>
            <person name="Sepulcre M.P."/>
            <person name="MacKenzie S."/>
            <person name="Goetz F.W."/>
            <person name="Mulero V."/>
            <person name="Planas J.V."/>
        </authorList>
    </citation>
    <scope>NUCLEOTIDE SEQUENCE [MRNA]</scope>
    <scope>TISSUE SPECIFICITY</scope>
    <scope>INDUCTION</scope>
</reference>
<feature type="signal peptide" evidence="2">
    <location>
        <begin position="1"/>
        <end position="24"/>
    </location>
</feature>
<feature type="chain" id="PRO_0000387951" description="Interleukin-6">
    <location>
        <begin position="25"/>
        <end position="225"/>
    </location>
</feature>
<feature type="glycosylation site" description="N-linked (GlcNAc...) asparagine" evidence="2">
    <location>
        <position position="98"/>
    </location>
</feature>
<protein>
    <recommendedName>
        <fullName>Interleukin-6</fullName>
        <shortName>IL-6</shortName>
        <shortName>sbIL-6</shortName>
    </recommendedName>
</protein>
<proteinExistence type="evidence at transcript level"/>
<keyword id="KW-0011">Acute phase</keyword>
<keyword id="KW-0202">Cytokine</keyword>
<keyword id="KW-0325">Glycoprotein</keyword>
<keyword id="KW-0339">Growth factor</keyword>
<keyword id="KW-1185">Reference proteome</keyword>
<keyword id="KW-0964">Secreted</keyword>
<keyword id="KW-0732">Signal</keyword>
<accession>B6CKP4</accession>
<dbReference type="EMBL" id="EU244588">
    <property type="protein sequence ID" value="ABY76175.1"/>
    <property type="molecule type" value="mRNA"/>
</dbReference>
<dbReference type="SMR" id="B6CKP4"/>
<dbReference type="FunCoup" id="B6CKP4">
    <property type="interactions" value="130"/>
</dbReference>
<dbReference type="GlyCosmos" id="B6CKP4">
    <property type="glycosylation" value="1 site, No reported glycans"/>
</dbReference>
<dbReference type="Ensembl" id="ENSSAUT00010039692.1">
    <property type="protein sequence ID" value="ENSSAUP00010037684.1"/>
    <property type="gene ID" value="ENSSAUG00010015916.1"/>
</dbReference>
<dbReference type="GeneTree" id="ENSGT00390000000878"/>
<dbReference type="InParanoid" id="B6CKP4"/>
<dbReference type="Proteomes" id="UP000472265">
    <property type="component" value="Chromosome 3"/>
</dbReference>
<dbReference type="GO" id="GO:0005615">
    <property type="term" value="C:extracellular space"/>
    <property type="evidence" value="ECO:0007669"/>
    <property type="project" value="UniProtKB-KW"/>
</dbReference>
<dbReference type="GO" id="GO:0005125">
    <property type="term" value="F:cytokine activity"/>
    <property type="evidence" value="ECO:0007669"/>
    <property type="project" value="UniProtKB-KW"/>
</dbReference>
<dbReference type="GO" id="GO:0008083">
    <property type="term" value="F:growth factor activity"/>
    <property type="evidence" value="ECO:0007669"/>
    <property type="project" value="UniProtKB-KW"/>
</dbReference>
<dbReference type="GO" id="GO:0005138">
    <property type="term" value="F:interleukin-6 receptor binding"/>
    <property type="evidence" value="ECO:0007669"/>
    <property type="project" value="InterPro"/>
</dbReference>
<dbReference type="GO" id="GO:0006953">
    <property type="term" value="P:acute-phase response"/>
    <property type="evidence" value="ECO:0007669"/>
    <property type="project" value="UniProtKB-KW"/>
</dbReference>
<dbReference type="GO" id="GO:0030154">
    <property type="term" value="P:cell differentiation"/>
    <property type="evidence" value="ECO:0007669"/>
    <property type="project" value="InterPro"/>
</dbReference>
<dbReference type="GO" id="GO:0042593">
    <property type="term" value="P:glucose homeostasis"/>
    <property type="evidence" value="ECO:0000250"/>
    <property type="project" value="UniProtKB"/>
</dbReference>
<dbReference type="GO" id="GO:0072574">
    <property type="term" value="P:hepatocyte proliferation"/>
    <property type="evidence" value="ECO:0000250"/>
    <property type="project" value="UniProtKB"/>
</dbReference>
<dbReference type="GO" id="GO:0070102">
    <property type="term" value="P:interleukin-6-mediated signaling pathway"/>
    <property type="evidence" value="ECO:0000250"/>
    <property type="project" value="UniProtKB"/>
</dbReference>
<dbReference type="GO" id="GO:0097421">
    <property type="term" value="P:liver regeneration"/>
    <property type="evidence" value="ECO:0000250"/>
    <property type="project" value="UniProtKB"/>
</dbReference>
<dbReference type="GO" id="GO:1904894">
    <property type="term" value="P:positive regulation of receptor signaling pathway via STAT"/>
    <property type="evidence" value="ECO:0000250"/>
    <property type="project" value="UniProtKB"/>
</dbReference>
<dbReference type="GO" id="GO:0070092">
    <property type="term" value="P:regulation of glucagon secretion"/>
    <property type="evidence" value="ECO:0000250"/>
    <property type="project" value="UniProtKB"/>
</dbReference>
<dbReference type="GO" id="GO:0050796">
    <property type="term" value="P:regulation of insulin secretion"/>
    <property type="evidence" value="ECO:0000250"/>
    <property type="project" value="UniProtKB"/>
</dbReference>
<dbReference type="GO" id="GO:0014823">
    <property type="term" value="P:response to activity"/>
    <property type="evidence" value="ECO:0000250"/>
    <property type="project" value="UniProtKB"/>
</dbReference>
<dbReference type="GO" id="GO:0010573">
    <property type="term" value="P:vascular endothelial growth factor production"/>
    <property type="evidence" value="ECO:0000250"/>
    <property type="project" value="UniProtKB"/>
</dbReference>
<dbReference type="Gene3D" id="1.20.1250.10">
    <property type="match status" value="1"/>
</dbReference>
<dbReference type="InterPro" id="IPR009079">
    <property type="entry name" value="4_helix_cytokine-like_core"/>
</dbReference>
<dbReference type="InterPro" id="IPR003574">
    <property type="entry name" value="IL-6-like"/>
</dbReference>
<dbReference type="PANTHER" id="PTHR48494">
    <property type="entry name" value="INTERLEUKIN-6"/>
    <property type="match status" value="1"/>
</dbReference>
<dbReference type="PANTHER" id="PTHR48494:SF1">
    <property type="entry name" value="INTERLEUKIN-6"/>
    <property type="match status" value="1"/>
</dbReference>
<dbReference type="SUPFAM" id="SSF47266">
    <property type="entry name" value="4-helical cytokines"/>
    <property type="match status" value="1"/>
</dbReference>
<sequence length="225" mass="25598">MPSRLNVFWLCAAALAALLRCAPAAPVDGAFTDNPAGDTSGEEWETERPADPLIALLKVVLEVIKTHRQEFEAEFHIRYDVLAQYNIPSLPADCPSTNFSMEALLHRLLQGLPVYTALLKYVEKEEPKSQIPSRFRQNSELLKQRITGKMRHAVQVTPLTSSQEQQLLRDLDSSDTFHRKMTAHSILYQLRSFLVDCKNAINKKEKLRESRANRAMTPVTLYYQS</sequence>
<evidence type="ECO:0000250" key="1">
    <source>
        <dbReference type="UniProtKB" id="P05231"/>
    </source>
</evidence>
<evidence type="ECO:0000255" key="2"/>
<evidence type="ECO:0000269" key="3">
    <source>
    </source>
</evidence>
<evidence type="ECO:0000305" key="4"/>
<gene>
    <name type="primary">il6</name>
</gene>
<organism>
    <name type="scientific">Sparus aurata</name>
    <name type="common">Gilthead sea bream</name>
    <dbReference type="NCBI Taxonomy" id="8175"/>
    <lineage>
        <taxon>Eukaryota</taxon>
        <taxon>Metazoa</taxon>
        <taxon>Chordata</taxon>
        <taxon>Craniata</taxon>
        <taxon>Vertebrata</taxon>
        <taxon>Euteleostomi</taxon>
        <taxon>Actinopterygii</taxon>
        <taxon>Neopterygii</taxon>
        <taxon>Teleostei</taxon>
        <taxon>Neoteleostei</taxon>
        <taxon>Acanthomorphata</taxon>
        <taxon>Eupercaria</taxon>
        <taxon>Spariformes</taxon>
        <taxon>Sparidae</taxon>
        <taxon>Sparus</taxon>
    </lineage>
</organism>
<comment type="function">
    <text evidence="1">Cytokine with a wide variety of biological functions in immunity, tissue regeneration, and metabolism. Binds to IL6R, then the complex associates to the signaling subunit IL6ST/gp130 to trigger the intracellular IL6-signaling pathway. The interaction with the membrane-bound IL6R and IL6ST stimulates 'classic signaling', whereas the binding of IL6 and soluble IL6R to IL6ST stimulates 'trans-signaling'. Alternatively, 'cluster signaling' occurs when membrane-bound IL6:IL6R complexes on transmitter cells activate IL6ST receptors on neighboring receiver cells.</text>
</comment>
<comment type="subunit">
    <text evidence="1">Component of a hexamer of two molecules each of IL6, IL6R and IL6ST; first binds to IL6R to associate with the signaling subunit IL6ST.</text>
</comment>
<comment type="subcellular location">
    <subcellularLocation>
        <location evidence="1">Secreted</location>
    </subcellularLocation>
</comment>
<comment type="tissue specificity">
    <text evidence="3">Expressed in white muscle, skin, spleen, anterior intestine and stomach. Not expressed in brain, gill, head kidney, posterior intestine and adipose tissue.</text>
</comment>
<comment type="induction">
    <text evidence="3">By LPS or Vibrio anguillarum infection.</text>
</comment>
<comment type="similarity">
    <text evidence="4">Belongs to the IL-6 superfamily.</text>
</comment>